<gene>
    <name type="primary">per</name>
    <name type="ORF">GA15408</name>
</gene>
<sequence length="1271" mass="135420">MEGESTESTQNTKVSDSAYSNSCSNSQSQRSGSSKSMLSGSHSSGSSGYGGKPSIQTSSSDMAIKRNKEKSRKKKKAKCTQAQATISSSLEGAEEQPHSSGTTCDQKILHVLATTQQLGDQPSSLDHKLGEQLEARHNCGVGKAEQPQSFSLPCPLSVSTLMPGIGVCHGGNAPGGKWEKTFESCKLDTGPAKTERVKEDSFCCVISMHDGIVLYTTPSITDVLGFPRDMWLGRSFIDFVHTKDRATFASQITTGIPIAESRCSMPKDARSTFCVMLRQYRGLQTSGYGVIGRSVNYEPFRLGMSFREAPEEERSDNYMVANSSNMLLVICATPIKSSYRVPEEIHSQRSPKFAIRHTAAGIISHVDSAAVSALGYLPQDLMGRSIMDLYHHDDLPVIKEIYESVMKKGQTAGASFCSKPYRFLIQNGCYILLETEWSSFVNPWSRKLEFVVGHHRVFQGPKICNVFETPPNSEPKIAEELQNKNTRIKEEIVNLLAEKVSRPSDTVKQEVSRRCQALASFMETLMDEVSRADLKLELPHENELTVSERDSVMLGEISPHHDYYDSKSSIETPPSYNQLNYNENLLRFFNSKPVTAPVEVDPPKVGSSDVSSTREDARSTLSPLNGFEGSGASGSSGHLTSGSNIHMSSATNTSNAGTGTGTVTGTGTIIATSGTGTVTCASGNMDANTSAAFNIAANTSAADNFGADTSAADTSGADTSAADNYAVDNYGPGNFGAENSCADNSGAENSCADNSGVDNSRPGNSGADNSAADNFGADNSGPDNSGADNSGPDNTGPDNSGAENSRAENSRADNSRPDHPRPDISGASNSRPDKTGPDKSGAENSASGSGSGTSGNEGPSSGGQDTRTTAGTPDSPPVSLTESLLNKHNDEMEKFMLKKHRESRGDRRTVEKNKNKTTNTIDSLKILEYSSTGPGHGTKRGGSYSWEGEGNKPKQQPTLNSVGVGTGAPEAPIPPVHPTHTTHTAIAQSSFSAQQSLFPTFYYIPATPLAASTPAPGALSPTPRNQKHHHHAHQHAPKVPDQASTSQQAAGPAAIPLQYVTGVMYPHPSLFYTHPAAAAATAMMYQPMPFPGIANAMQLPEQPSTSQSNYSKTVFSVIVAPPTITTTTATTTPKTQGAFHSITPAQLQRPSSQDTSVKTEPASNATPSHSSNKKKANSSIASGIGDYNSNQACSRNRANVKKYTDSNGNSDDMDGSSFSSFYSSFIKTTDGSESPPDNDKEAKHRKLKNITRLSSKIMEHPEEDQTQHGDG</sequence>
<evidence type="ECO:0000250" key="1"/>
<evidence type="ECO:0000255" key="2"/>
<evidence type="ECO:0000255" key="3">
    <source>
        <dbReference type="PROSITE-ProRule" id="PRU00140"/>
    </source>
</evidence>
<evidence type="ECO:0000256" key="4">
    <source>
        <dbReference type="SAM" id="MobiDB-lite"/>
    </source>
</evidence>
<evidence type="ECO:0000305" key="5"/>
<keyword id="KW-0090">Biological rhythms</keyword>
<keyword id="KW-0963">Cytoplasm</keyword>
<keyword id="KW-0539">Nucleus</keyword>
<keyword id="KW-0597">Phosphoprotein</keyword>
<keyword id="KW-1185">Reference proteome</keyword>
<keyword id="KW-0677">Repeat</keyword>
<dbReference type="EMBL" id="X13878">
    <property type="protein sequence ID" value="CAA32082.1"/>
    <property type="molecule type" value="Genomic_DNA"/>
</dbReference>
<dbReference type="EMBL" id="CH379064">
    <property type="protein sequence ID" value="EAL31601.2"/>
    <property type="molecule type" value="Genomic_DNA"/>
</dbReference>
<dbReference type="PIR" id="S01827">
    <property type="entry name" value="S01827"/>
</dbReference>
<dbReference type="SMR" id="P12348"/>
<dbReference type="FunCoup" id="P12348">
    <property type="interactions" value="12"/>
</dbReference>
<dbReference type="STRING" id="46245.P12348"/>
<dbReference type="eggNOG" id="KOG3753">
    <property type="taxonomic scope" value="Eukaryota"/>
</dbReference>
<dbReference type="HOGENOM" id="CLU_002704_0_0_1"/>
<dbReference type="InParanoid" id="P12348"/>
<dbReference type="OMA" id="SYPSCTQ"/>
<dbReference type="Proteomes" id="UP000001819">
    <property type="component" value="Unplaced"/>
</dbReference>
<dbReference type="GO" id="GO:0005634">
    <property type="term" value="C:nucleus"/>
    <property type="evidence" value="ECO:0007669"/>
    <property type="project" value="UniProtKB-SubCell"/>
</dbReference>
<dbReference type="GO" id="GO:0048471">
    <property type="term" value="C:perinuclear region of cytoplasm"/>
    <property type="evidence" value="ECO:0007669"/>
    <property type="project" value="UniProtKB-SubCell"/>
</dbReference>
<dbReference type="GO" id="GO:0000976">
    <property type="term" value="F:transcription cis-regulatory region binding"/>
    <property type="evidence" value="ECO:0007669"/>
    <property type="project" value="TreeGrafter"/>
</dbReference>
<dbReference type="GO" id="GO:0001222">
    <property type="term" value="F:transcription corepressor binding"/>
    <property type="evidence" value="ECO:0007669"/>
    <property type="project" value="TreeGrafter"/>
</dbReference>
<dbReference type="GO" id="GO:0032922">
    <property type="term" value="P:circadian regulation of gene expression"/>
    <property type="evidence" value="ECO:0007669"/>
    <property type="project" value="TreeGrafter"/>
</dbReference>
<dbReference type="GO" id="GO:0043153">
    <property type="term" value="P:entrainment of circadian clock by photoperiod"/>
    <property type="evidence" value="ECO:0007669"/>
    <property type="project" value="TreeGrafter"/>
</dbReference>
<dbReference type="GO" id="GO:0000122">
    <property type="term" value="P:negative regulation of transcription by RNA polymerase II"/>
    <property type="evidence" value="ECO:0007669"/>
    <property type="project" value="TreeGrafter"/>
</dbReference>
<dbReference type="CDD" id="cd00130">
    <property type="entry name" value="PAS"/>
    <property type="match status" value="2"/>
</dbReference>
<dbReference type="FunFam" id="1.20.5.770:FF:000001">
    <property type="entry name" value="Period circadian protein"/>
    <property type="match status" value="1"/>
</dbReference>
<dbReference type="FunFam" id="3.30.450.20:FF:000066">
    <property type="entry name" value="Period circadian protein"/>
    <property type="match status" value="1"/>
</dbReference>
<dbReference type="FunFam" id="3.30.450.20:FF:000072">
    <property type="entry name" value="Period circadian protein"/>
    <property type="match status" value="1"/>
</dbReference>
<dbReference type="Gene3D" id="3.30.450.20">
    <property type="entry name" value="PAS domain"/>
    <property type="match status" value="2"/>
</dbReference>
<dbReference type="Gene3D" id="1.20.5.770">
    <property type="entry name" value="Single helix bin"/>
    <property type="match status" value="1"/>
</dbReference>
<dbReference type="InterPro" id="IPR000014">
    <property type="entry name" value="PAS"/>
</dbReference>
<dbReference type="InterPro" id="IPR035965">
    <property type="entry name" value="PAS-like_dom_sf"/>
</dbReference>
<dbReference type="InterPro" id="IPR013767">
    <property type="entry name" value="PAS_fold"/>
</dbReference>
<dbReference type="InterPro" id="IPR050760">
    <property type="entry name" value="Period_circadian_regulator"/>
</dbReference>
<dbReference type="PANTHER" id="PTHR11269">
    <property type="entry name" value="PERIOD CIRCADIAN PROTEIN"/>
    <property type="match status" value="1"/>
</dbReference>
<dbReference type="PANTHER" id="PTHR11269:SF16">
    <property type="entry name" value="PERIOD CIRCADIAN PROTEIN"/>
    <property type="match status" value="1"/>
</dbReference>
<dbReference type="Pfam" id="PF00989">
    <property type="entry name" value="PAS"/>
    <property type="match status" value="1"/>
</dbReference>
<dbReference type="Pfam" id="PF14598">
    <property type="entry name" value="PAS_11"/>
    <property type="match status" value="1"/>
</dbReference>
<dbReference type="SMART" id="SM00091">
    <property type="entry name" value="PAS"/>
    <property type="match status" value="2"/>
</dbReference>
<dbReference type="SUPFAM" id="SSF55785">
    <property type="entry name" value="PYP-like sensor domain (PAS domain)"/>
    <property type="match status" value="2"/>
</dbReference>
<dbReference type="PROSITE" id="PS50112">
    <property type="entry name" value="PAS"/>
    <property type="match status" value="2"/>
</dbReference>
<proteinExistence type="inferred from homology"/>
<comment type="function">
    <text evidence="1">Essential for biological clock functions. Determines the period length of circadian and ultradian rhythms; an increase in PER dosage leads to shortened circadian rhythms and a decrease leads to lengthened circadian rhythms. Essential for the circadian rhythmicity of locomotor activity, eclosion behavior, and for the rhythmic component of the male courtship song that originates in the thoracic nervous system. The biological cycle depends on the rhythmic formation and nuclear localization of the TIM-PER complex. Light induces the degradation of TIM, which promotes elimination of PER. Nuclear activity of the heterodimer coordinatively regulates PER and TIM transcription through a negative feedback loop. Behaves as a negative element in circadian transcriptional loop. Does not appear to bind DNA, suggesting indirect transcriptional inhibition (By similarity).</text>
</comment>
<comment type="subunit">
    <text evidence="1">Forms a heterodimer with timeless (TIM); the complex then translocates into the nucleus.</text>
</comment>
<comment type="subcellular location">
    <subcellularLocation>
        <location evidence="1">Nucleus</location>
    </subcellularLocation>
    <subcellularLocation>
        <location evidence="1">Cytoplasm</location>
        <location evidence="1">Perinuclear region</location>
    </subcellularLocation>
    <text evidence="1">Nuclear at specific periods of the day. First accumulates in the perinuclear region about one hour before translocation into the nucleus. Interaction with Tim is required for nuclear localization (By similarity).</text>
</comment>
<comment type="domain">
    <text evidence="1">The run of Gly-Thr is implicated in the maintenance of circadian period at different temperatures. Deletion of the repeat leads to a shortening of the courtship song cycle period, and thus could be important for determining features of species-specific mating behavior (By similarity).</text>
</comment>
<comment type="PTM">
    <text evidence="1">Phosphorylated with a circadian rhythmicity, probably by the double-time protein (dbt). Phosphorylation could be implicated in the stability of per monomer and in the formation of heterodimer per-tim (By similarity).</text>
</comment>
<organism>
    <name type="scientific">Drosophila pseudoobscura pseudoobscura</name>
    <name type="common">Fruit fly</name>
    <dbReference type="NCBI Taxonomy" id="46245"/>
    <lineage>
        <taxon>Eukaryota</taxon>
        <taxon>Metazoa</taxon>
        <taxon>Ecdysozoa</taxon>
        <taxon>Arthropoda</taxon>
        <taxon>Hexapoda</taxon>
        <taxon>Insecta</taxon>
        <taxon>Pterygota</taxon>
        <taxon>Neoptera</taxon>
        <taxon>Endopterygota</taxon>
        <taxon>Diptera</taxon>
        <taxon>Brachycera</taxon>
        <taxon>Muscomorpha</taxon>
        <taxon>Ephydroidea</taxon>
        <taxon>Drosophilidae</taxon>
        <taxon>Drosophila</taxon>
        <taxon>Sophophora</taxon>
    </lineage>
</organism>
<protein>
    <recommendedName>
        <fullName>Period circadian protein</fullName>
    </recommendedName>
</protein>
<name>PER_DROPS</name>
<feature type="chain" id="PRO_0000162602" description="Period circadian protein">
    <location>
        <begin position="1"/>
        <end position="1271"/>
    </location>
</feature>
<feature type="domain" description="PAS 1" evidence="3">
    <location>
        <begin position="189"/>
        <end position="259"/>
    </location>
</feature>
<feature type="domain" description="PAS 2" evidence="3">
    <location>
        <begin position="339"/>
        <end position="409"/>
    </location>
</feature>
<feature type="repeat" description="1">
    <location>
        <begin position="657"/>
        <end position="658"/>
    </location>
</feature>
<feature type="repeat" description="2">
    <location>
        <begin position="659"/>
        <end position="660"/>
    </location>
</feature>
<feature type="repeat" description="3">
    <location>
        <begin position="661"/>
        <end position="662"/>
    </location>
</feature>
<feature type="repeat" description="4; approximate">
    <location>
        <begin position="663"/>
        <end position="664"/>
    </location>
</feature>
<feature type="repeat" description="5">
    <location>
        <begin position="665"/>
        <end position="666"/>
    </location>
</feature>
<feature type="repeat" description="6">
    <location>
        <begin position="667"/>
        <end position="668"/>
    </location>
</feature>
<feature type="repeat" description="7">
    <location>
        <begin position="674"/>
        <end position="675"/>
    </location>
</feature>
<feature type="repeat" description="8">
    <location>
        <begin position="676"/>
        <end position="677"/>
    </location>
</feature>
<feature type="region of interest" description="Disordered" evidence="4">
    <location>
        <begin position="1"/>
        <end position="102"/>
    </location>
</feature>
<feature type="region of interest" description="Disordered" evidence="4">
    <location>
        <begin position="596"/>
        <end position="660"/>
    </location>
</feature>
<feature type="region of interest" description="8 X 2 AA approximate tandem repeats of G-T">
    <location>
        <begin position="657"/>
        <end position="677"/>
    </location>
</feature>
<feature type="region of interest" description="Disordered" evidence="4">
    <location>
        <begin position="746"/>
        <end position="913"/>
    </location>
</feature>
<feature type="region of interest" description="Disordered" evidence="4">
    <location>
        <begin position="928"/>
        <end position="956"/>
    </location>
</feature>
<feature type="region of interest" description="Disordered" evidence="4">
    <location>
        <begin position="1014"/>
        <end position="1050"/>
    </location>
</feature>
<feature type="region of interest" description="Disordered" evidence="4">
    <location>
        <begin position="1143"/>
        <end position="1191"/>
    </location>
</feature>
<feature type="region of interest" description="Disordered" evidence="4">
    <location>
        <begin position="1227"/>
        <end position="1271"/>
    </location>
</feature>
<feature type="short sequence motif" description="Nuclear localization signal" evidence="2">
    <location>
        <begin position="65"/>
        <end position="78"/>
    </location>
</feature>
<feature type="compositionally biased region" description="Polar residues" evidence="4">
    <location>
        <begin position="1"/>
        <end position="14"/>
    </location>
</feature>
<feature type="compositionally biased region" description="Low complexity" evidence="4">
    <location>
        <begin position="15"/>
        <end position="46"/>
    </location>
</feature>
<feature type="compositionally biased region" description="Basic residues" evidence="4">
    <location>
        <begin position="65"/>
        <end position="78"/>
    </location>
</feature>
<feature type="compositionally biased region" description="Polar residues" evidence="4">
    <location>
        <begin position="80"/>
        <end position="90"/>
    </location>
</feature>
<feature type="compositionally biased region" description="Polar residues" evidence="4">
    <location>
        <begin position="746"/>
        <end position="772"/>
    </location>
</feature>
<feature type="compositionally biased region" description="Polar residues" evidence="4">
    <location>
        <begin position="781"/>
        <end position="803"/>
    </location>
</feature>
<feature type="compositionally biased region" description="Basic and acidic residues" evidence="4">
    <location>
        <begin position="805"/>
        <end position="822"/>
    </location>
</feature>
<feature type="compositionally biased region" description="Basic and acidic residues" evidence="4">
    <location>
        <begin position="831"/>
        <end position="841"/>
    </location>
</feature>
<feature type="compositionally biased region" description="Polar residues" evidence="4">
    <location>
        <begin position="864"/>
        <end position="884"/>
    </location>
</feature>
<feature type="compositionally biased region" description="Basic and acidic residues" evidence="4">
    <location>
        <begin position="885"/>
        <end position="896"/>
    </location>
</feature>
<feature type="compositionally biased region" description="Basic and acidic residues" evidence="4">
    <location>
        <begin position="903"/>
        <end position="913"/>
    </location>
</feature>
<feature type="compositionally biased region" description="Low complexity" evidence="4">
    <location>
        <begin position="1014"/>
        <end position="1023"/>
    </location>
</feature>
<feature type="compositionally biased region" description="Basic residues" evidence="4">
    <location>
        <begin position="1025"/>
        <end position="1036"/>
    </location>
</feature>
<feature type="compositionally biased region" description="Polar residues" evidence="4">
    <location>
        <begin position="1143"/>
        <end position="1167"/>
    </location>
</feature>
<feature type="compositionally biased region" description="Basic and acidic residues" evidence="4">
    <location>
        <begin position="1257"/>
        <end position="1271"/>
    </location>
</feature>
<feature type="sequence conflict" description="In Ref. 1; CAA32082." evidence="5" ref="1">
    <original>P</original>
    <variation>S</variation>
    <location>
        <position position="147"/>
    </location>
</feature>
<feature type="sequence conflict" description="In Ref. 1; CAA32082." evidence="5" ref="1">
    <original>D</original>
    <variation>E</variation>
    <location>
        <position position="188"/>
    </location>
</feature>
<feature type="sequence conflict" description="In Ref. 1; CAA32082." evidence="5" ref="1">
    <original>EL</original>
    <variation>DV</variation>
    <location>
        <begin position="537"/>
        <end position="538"/>
    </location>
</feature>
<feature type="sequence conflict" description="In Ref. 1; CAA32082." evidence="5" ref="1">
    <location>
        <begin position="726"/>
        <end position="730"/>
    </location>
</feature>
<feature type="sequence conflict" description="In Ref. 1; CAA32082." evidence="5" ref="1">
    <original>G</original>
    <variation>D</variation>
    <location>
        <position position="763"/>
    </location>
</feature>
<feature type="sequence conflict" description="In Ref. 1; CAA32082." evidence="5" ref="1">
    <location>
        <begin position="777"/>
        <end position="781"/>
    </location>
</feature>
<feature type="sequence conflict" description="In Ref. 1; CAA32082." evidence="5" ref="1">
    <original>PDS</original>
    <variation>ADA</variation>
    <location>
        <begin position="873"/>
        <end position="875"/>
    </location>
</feature>
<feature type="sequence conflict" description="In Ref. 1; CAA32082." evidence="5" ref="1">
    <original>T</original>
    <variation>A</variation>
    <location>
        <position position="1061"/>
    </location>
</feature>
<feature type="sequence conflict" description="In Ref. 1; CAA32082." evidence="5" ref="1">
    <original>S</original>
    <variation>N</variation>
    <location>
        <position position="1104"/>
    </location>
</feature>
<feature type="sequence conflict" description="In Ref. 1; CAA32082." evidence="5" ref="1">
    <location>
        <begin position="1117"/>
        <end position="1136"/>
    </location>
</feature>
<feature type="sequence conflict" description="In Ref. 1; CAA32082." evidence="5" ref="1">
    <original>A</original>
    <variation>T</variation>
    <location>
        <position position="1165"/>
    </location>
</feature>
<feature type="sequence conflict" description="In Ref. 1; CAA32082." evidence="5" ref="1">
    <original>S</original>
    <variation>P</variation>
    <location>
        <position position="1179"/>
    </location>
</feature>
<reference key="1">
    <citation type="journal article" date="1988" name="EMBO J.">
        <title>Interspecific comparison of the period gene of Drosophila reveals large blocks of non-conserved coding DNA.</title>
        <authorList>
            <person name="Colot H.V."/>
            <person name="Hall J.C."/>
            <person name="Rosbash M."/>
        </authorList>
    </citation>
    <scope>NUCLEOTIDE SEQUENCE [GENOMIC DNA]</scope>
    <source>
        <strain>Ayala</strain>
    </source>
</reference>
<reference key="2">
    <citation type="journal article" date="2005" name="Genome Res.">
        <title>Comparative genome sequencing of Drosophila pseudoobscura: chromosomal, gene, and cis-element evolution.</title>
        <authorList>
            <person name="Richards S."/>
            <person name="Liu Y."/>
            <person name="Bettencourt B.R."/>
            <person name="Hradecky P."/>
            <person name="Letovsky S."/>
            <person name="Nielsen R."/>
            <person name="Thornton K."/>
            <person name="Hubisz M.J."/>
            <person name="Chen R."/>
            <person name="Meisel R.P."/>
            <person name="Couronne O."/>
            <person name="Hua S."/>
            <person name="Smith M.A."/>
            <person name="Zhang P."/>
            <person name="Liu J."/>
            <person name="Bussemaker H.J."/>
            <person name="van Batenburg M.F."/>
            <person name="Howells S.L."/>
            <person name="Scherer S.E."/>
            <person name="Sodergren E."/>
            <person name="Matthews B.B."/>
            <person name="Crosby M.A."/>
            <person name="Schroeder A.J."/>
            <person name="Ortiz-Barrientos D."/>
            <person name="Rives C.M."/>
            <person name="Metzker M.L."/>
            <person name="Muzny D.M."/>
            <person name="Scott G."/>
            <person name="Steffen D."/>
            <person name="Wheeler D.A."/>
            <person name="Worley K.C."/>
            <person name="Havlak P."/>
            <person name="Durbin K.J."/>
            <person name="Egan A."/>
            <person name="Gill R."/>
            <person name="Hume J."/>
            <person name="Morgan M.B."/>
            <person name="Miner G."/>
            <person name="Hamilton C."/>
            <person name="Huang Y."/>
            <person name="Waldron L."/>
            <person name="Verduzco D."/>
            <person name="Clerc-Blankenburg K.P."/>
            <person name="Dubchak I."/>
            <person name="Noor M.A.F."/>
            <person name="Anderson W."/>
            <person name="White K.P."/>
            <person name="Clark A.G."/>
            <person name="Schaeffer S.W."/>
            <person name="Gelbart W.M."/>
            <person name="Weinstock G.M."/>
            <person name="Gibbs R.A."/>
        </authorList>
    </citation>
    <scope>NUCLEOTIDE SEQUENCE [LARGE SCALE GENOMIC DNA]</scope>
    <source>
        <strain>MV2-25 / Tucson 14011-0121.94</strain>
    </source>
</reference>
<accession>P12348</accession>
<accession>Q29I05</accession>